<accession>Q45391</accession>
<name>PTLB_BORPE</name>
<gene>
    <name type="primary">ptlB</name>
    <name type="ordered locus">BP3789</name>
</gene>
<proteinExistence type="evidence at transcript level"/>
<reference key="1">
    <citation type="journal article" date="1986" name="Proc. Natl. Acad. Sci. U.S.A.">
        <title>Cloning and sequencing of the pertussis toxin genes: operon structure and gene duplication.</title>
        <authorList>
            <person name="Nicosia A."/>
            <person name="Perugini M."/>
            <person name="Franzini C."/>
            <person name="Casagli M.C."/>
            <person name="Borri M.G."/>
            <person name="Antoni G."/>
            <person name="Almoni M."/>
            <person name="Neri P."/>
            <person name="Ratti G."/>
            <person name="Rappuoli R."/>
        </authorList>
    </citation>
    <scope>NUCLEOTIDE SEQUENCE [GENOMIC DNA]</scope>
    <source>
        <strain>BP165</strain>
    </source>
</reference>
<reference key="2">
    <citation type="journal article" date="1993" name="Proc. Natl. Acad. Sci. U.S.A.">
        <title>Molecular characterization of an operon required for pertussis toxin secretion.</title>
        <authorList>
            <person name="Weiss A.A."/>
            <person name="Johnson F.D."/>
            <person name="Burns D.L."/>
        </authorList>
    </citation>
    <scope>NUCLEOTIDE SEQUENCE [GENOMIC DNA]</scope>
    <scope>FUNCTION</scope>
    <source>
        <strain>Tohama I / BP338</strain>
    </source>
</reference>
<reference key="3">
    <citation type="journal article" date="2003" name="Nat. Genet.">
        <title>Comparative analysis of the genome sequences of Bordetella pertussis, Bordetella parapertussis and Bordetella bronchiseptica.</title>
        <authorList>
            <person name="Parkhill J."/>
            <person name="Sebaihia M."/>
            <person name="Preston A."/>
            <person name="Murphy L.D."/>
            <person name="Thomson N.R."/>
            <person name="Harris D.E."/>
            <person name="Holden M.T.G."/>
            <person name="Churcher C.M."/>
            <person name="Bentley S.D."/>
            <person name="Mungall K.L."/>
            <person name="Cerdeno-Tarraga A.-M."/>
            <person name="Temple L."/>
            <person name="James K.D."/>
            <person name="Harris B."/>
            <person name="Quail M.A."/>
            <person name="Achtman M."/>
            <person name="Atkin R."/>
            <person name="Baker S."/>
            <person name="Basham D."/>
            <person name="Bason N."/>
            <person name="Cherevach I."/>
            <person name="Chillingworth T."/>
            <person name="Collins M."/>
            <person name="Cronin A."/>
            <person name="Davis P."/>
            <person name="Doggett J."/>
            <person name="Feltwell T."/>
            <person name="Goble A."/>
            <person name="Hamlin N."/>
            <person name="Hauser H."/>
            <person name="Holroyd S."/>
            <person name="Jagels K."/>
            <person name="Leather S."/>
            <person name="Moule S."/>
            <person name="Norberczak H."/>
            <person name="O'Neil S."/>
            <person name="Ormond D."/>
            <person name="Price C."/>
            <person name="Rabbinowitsch E."/>
            <person name="Rutter S."/>
            <person name="Sanders M."/>
            <person name="Saunders D."/>
            <person name="Seeger K."/>
            <person name="Sharp S."/>
            <person name="Simmonds M."/>
            <person name="Skelton J."/>
            <person name="Squares R."/>
            <person name="Squares S."/>
            <person name="Stevens K."/>
            <person name="Unwin L."/>
            <person name="Whitehead S."/>
            <person name="Barrell B.G."/>
            <person name="Maskell D.J."/>
        </authorList>
    </citation>
    <scope>NUCLEOTIDE SEQUENCE [LARGE SCALE GENOMIC DNA]</scope>
    <source>
        <strain>Tohama I / ATCC BAA-589 / NCTC 13251</strain>
    </source>
</reference>
<reference key="4">
    <citation type="journal article" date="1995" name="J. Bacteriol.">
        <title>Synergistic binding of RNA polymerase and BvgA phosphate to the pertussis toxin promoter of Bordetella pertussis.</title>
        <authorList>
            <person name="Boucher P.E."/>
            <person name="Stibitz S."/>
        </authorList>
    </citation>
    <scope>REGULATION BY BVGS/BVGA</scope>
    <source>
        <strain>Tohama I / ATCC BAA-589 / NCTC 13251</strain>
    </source>
</reference>
<reference key="5">
    <citation type="journal article" date="1996" name="Infect. Immun.">
        <title>The pertussis toxin liberation genes of Bordetella pertussis are transcriptionally linked to the pertussis toxin operon.</title>
        <authorList>
            <person name="Ricci S."/>
            <person name="Rappuoli R."/>
            <person name="Scarlato V."/>
        </authorList>
    </citation>
    <scope>COTRANSCRIPTION WITH PTX</scope>
    <source>
        <strain>Wellcome 28</strain>
    </source>
</reference>
<reference key="6">
    <citation type="journal article" date="1999" name="FEMS Microbiol. Lett.">
        <title>Mutants in the ptlA-H genes of Bordetella pertussis are deficient for pertussis toxin secretion.</title>
        <authorList>
            <person name="Craig-Mylius K.A."/>
            <person name="Weiss A.A."/>
        </authorList>
    </citation>
    <scope>FUNCTION</scope>
    <source>
        <strain>Tohama I / BP338</strain>
    </source>
</reference>
<reference key="7">
    <citation type="journal article" date="2004" name="Infect. Immun.">
        <title>Analysis of subassemblies of pertussis toxin subunits in vivo and their interaction with the ptl transport apparatus.</title>
        <authorList>
            <person name="Burns D.L."/>
            <person name="Fiddner S."/>
            <person name="Cheung A.M."/>
            <person name="Verma A."/>
        </authorList>
    </citation>
    <scope>FUNCTION</scope>
    <source>
        <strain>Tohama I / BP338</strain>
    </source>
</reference>
<feature type="chain" id="PRO_0000262573" description="Type IV secretion system protein PtlB">
    <location>
        <begin position="1"/>
        <end position="104"/>
    </location>
</feature>
<feature type="transmembrane region" description="Helical" evidence="1">
    <location>
        <begin position="30"/>
        <end position="50"/>
    </location>
</feature>
<sequence>MRDPLFKGCTRPAMLMGVPATPLAVCSGTIALLGIWFSIAFLALFPVALLAMRIMIRRDDQQFRLIWLYLRMRWLSRDRTHAFWQSTVYAPLRYAERRRRLRKP</sequence>
<dbReference type="EMBL" id="M14378">
    <property type="protein sequence ID" value="AAA83986.1"/>
    <property type="molecule type" value="Genomic_DNA"/>
</dbReference>
<dbReference type="EMBL" id="L10720">
    <property type="status" value="NOT_ANNOTATED_CDS"/>
    <property type="molecule type" value="Genomic_DNA"/>
</dbReference>
<dbReference type="EMBL" id="BX640422">
    <property type="protein sequence ID" value="CAE44044.1"/>
    <property type="molecule type" value="Genomic_DNA"/>
</dbReference>
<dbReference type="PIR" id="A47301">
    <property type="entry name" value="A47301"/>
</dbReference>
<dbReference type="RefSeq" id="NP_882288.1">
    <property type="nucleotide sequence ID" value="NC_002929.2"/>
</dbReference>
<dbReference type="RefSeq" id="WP_010929494.1">
    <property type="nucleotide sequence ID" value="NZ_CP039022.1"/>
</dbReference>
<dbReference type="SMR" id="Q45391"/>
<dbReference type="STRING" id="257313.BP3789"/>
<dbReference type="TCDB" id="3.A.7.3.1">
    <property type="family name" value="the type iv (conjugal dna-protein transfer or virb) secretory pathway (ivsp) family"/>
</dbReference>
<dbReference type="PaxDb" id="257313-BP3789"/>
<dbReference type="GeneID" id="93206108"/>
<dbReference type="KEGG" id="bpe:BP3789"/>
<dbReference type="PATRIC" id="fig|257313.5.peg.4093"/>
<dbReference type="eggNOG" id="COG3702">
    <property type="taxonomic scope" value="Bacteria"/>
</dbReference>
<dbReference type="HOGENOM" id="CLU_158477_0_0_4"/>
<dbReference type="Proteomes" id="UP000002676">
    <property type="component" value="Chromosome"/>
</dbReference>
<dbReference type="GO" id="GO:0005886">
    <property type="term" value="C:plasma membrane"/>
    <property type="evidence" value="ECO:0007669"/>
    <property type="project" value="UniProtKB-SubCell"/>
</dbReference>
<dbReference type="InterPro" id="IPR007792">
    <property type="entry name" value="T4SS_VirB3/TrbD/AvhB"/>
</dbReference>
<dbReference type="Pfam" id="PF05101">
    <property type="entry name" value="VirB3"/>
    <property type="match status" value="1"/>
</dbReference>
<protein>
    <recommendedName>
        <fullName>Type IV secretion system protein PtlB</fullName>
    </recommendedName>
    <alternativeName>
        <fullName>Pertussis toxin liberation protein B</fullName>
    </alternativeName>
</protein>
<evidence type="ECO:0000255" key="1"/>
<evidence type="ECO:0000269" key="2">
    <source>
    </source>
</evidence>
<evidence type="ECO:0000269" key="3">
    <source>
    </source>
</evidence>
<evidence type="ECO:0000269" key="4">
    <source>
    </source>
</evidence>
<evidence type="ECO:0000305" key="5"/>
<comment type="function">
    <text evidence="2 3 4">Component of the type IV secretion system ptl required for secretion of assembled pertussis toxin (PTX) through the outer membrane.</text>
</comment>
<comment type="subcellular location">
    <subcellularLocation>
        <location evidence="5">Cell membrane</location>
        <topology evidence="5">Single-pass membrane protein</topology>
    </subcellularLocation>
</comment>
<comment type="induction">
    <text>Cotranscribed with ptxABCDE. Activated by the two-component regulatory system BvgS/BvgA.</text>
</comment>
<comment type="similarity">
    <text evidence="5">Belongs to the virB3 family.</text>
</comment>
<organism>
    <name type="scientific">Bordetella pertussis (strain Tohama I / ATCC BAA-589 / NCTC 13251)</name>
    <dbReference type="NCBI Taxonomy" id="257313"/>
    <lineage>
        <taxon>Bacteria</taxon>
        <taxon>Pseudomonadati</taxon>
        <taxon>Pseudomonadota</taxon>
        <taxon>Betaproteobacteria</taxon>
        <taxon>Burkholderiales</taxon>
        <taxon>Alcaligenaceae</taxon>
        <taxon>Bordetella</taxon>
    </lineage>
</organism>
<keyword id="KW-1003">Cell membrane</keyword>
<keyword id="KW-0472">Membrane</keyword>
<keyword id="KW-1185">Reference proteome</keyword>
<keyword id="KW-0812">Transmembrane</keyword>
<keyword id="KW-1133">Transmembrane helix</keyword>
<keyword id="KW-0813">Transport</keyword>